<keyword id="KW-0131">Cell cycle</keyword>
<keyword id="KW-0963">Cytoplasm</keyword>
<keyword id="KW-0221">Differentiation</keyword>
<keyword id="KW-0539">Nucleus</keyword>
<keyword id="KW-1185">Reference proteome</keyword>
<keyword id="KW-0678">Repressor</keyword>
<keyword id="KW-0804">Transcription</keyword>
<keyword id="KW-0805">Transcription regulation</keyword>
<dbReference type="EMBL" id="CR857888">
    <property type="protein sequence ID" value="CAH90141.1"/>
    <property type="molecule type" value="mRNA"/>
</dbReference>
<dbReference type="RefSeq" id="NP_001125034.1">
    <property type="nucleotide sequence ID" value="NM_001131562.1"/>
</dbReference>
<dbReference type="FunCoup" id="Q5RDL6">
    <property type="interactions" value="275"/>
</dbReference>
<dbReference type="STRING" id="9601.ENSPPYP00000007318"/>
<dbReference type="GeneID" id="100171915"/>
<dbReference type="KEGG" id="pon:100171915"/>
<dbReference type="CTD" id="23741"/>
<dbReference type="eggNOG" id="ENOG502RQIS">
    <property type="taxonomic scope" value="Eukaryota"/>
</dbReference>
<dbReference type="InParanoid" id="Q5RDL6"/>
<dbReference type="Proteomes" id="UP000001595">
    <property type="component" value="Unplaced"/>
</dbReference>
<dbReference type="GO" id="GO:0005737">
    <property type="term" value="C:cytoplasm"/>
    <property type="evidence" value="ECO:0007669"/>
    <property type="project" value="UniProtKB-SubCell"/>
</dbReference>
<dbReference type="GO" id="GO:0005654">
    <property type="term" value="C:nucleoplasm"/>
    <property type="evidence" value="ECO:0007669"/>
    <property type="project" value="TreeGrafter"/>
</dbReference>
<dbReference type="GO" id="GO:0003714">
    <property type="term" value="F:transcription corepressor activity"/>
    <property type="evidence" value="ECO:0007669"/>
    <property type="project" value="TreeGrafter"/>
</dbReference>
<dbReference type="GO" id="GO:0030154">
    <property type="term" value="P:cell differentiation"/>
    <property type="evidence" value="ECO:0007669"/>
    <property type="project" value="UniProtKB-KW"/>
</dbReference>
<dbReference type="InterPro" id="IPR033258">
    <property type="entry name" value="EID"/>
</dbReference>
<dbReference type="PANTHER" id="PTHR15556:SF5">
    <property type="entry name" value="EP300-INTERACTING INHIBITOR OF DIFFERENTIATION 1"/>
    <property type="match status" value="1"/>
</dbReference>
<dbReference type="PANTHER" id="PTHR15556">
    <property type="entry name" value="EP300-INTERACTING INHIBITOR OF DIFFERENTIATION 2-RELATED"/>
    <property type="match status" value="1"/>
</dbReference>
<organism>
    <name type="scientific">Pongo abelii</name>
    <name type="common">Sumatran orangutan</name>
    <name type="synonym">Pongo pygmaeus abelii</name>
    <dbReference type="NCBI Taxonomy" id="9601"/>
    <lineage>
        <taxon>Eukaryota</taxon>
        <taxon>Metazoa</taxon>
        <taxon>Chordata</taxon>
        <taxon>Craniata</taxon>
        <taxon>Vertebrata</taxon>
        <taxon>Euteleostomi</taxon>
        <taxon>Mammalia</taxon>
        <taxon>Eutheria</taxon>
        <taxon>Euarchontoglires</taxon>
        <taxon>Primates</taxon>
        <taxon>Haplorrhini</taxon>
        <taxon>Catarrhini</taxon>
        <taxon>Hominidae</taxon>
        <taxon>Pongo</taxon>
    </lineage>
</organism>
<protein>
    <recommendedName>
        <fullName>EP300-interacting inhibitor of differentiation 1</fullName>
    </recommendedName>
    <alternativeName>
        <fullName>E1A-like inhibitor of differentiation 1</fullName>
        <shortName>EID-1</shortName>
    </alternativeName>
</protein>
<comment type="function">
    <text evidence="1">Interacts with RB1 and EP300 and acts as a repressor of MYOD1 transactivation. Inhibits EP300 and CBP histone acetyltransferase activity. May be involved in coupling cell cycle exit to the transcriptional activation of genes required for cellular differentiation. May act as a candidate coinhibitory factor for NR0B2 that can be directly linked to transcription inhibitory mechanisms (By similarity).</text>
</comment>
<comment type="subunit">
    <text evidence="2">Interacts via its LXCXE motif with the entire pocket region of RB1. Interacts with EP300, NR0B2 and TRIM27 (By similarity).</text>
</comment>
<comment type="subcellular location">
    <subcellularLocation>
        <location evidence="2">Nucleus</location>
    </subcellularLocation>
    <subcellularLocation>
        <location evidence="2">Cytoplasm</location>
    </subcellularLocation>
    <text evidence="2">May shuttle between nucleus and cytoplasm.</text>
</comment>
<comment type="miscellaneous">
    <text evidence="2">Inhibition of MYOD1 may be partly due to the ability of EID1 to bind and inhibit EP300 histone acetyltransferase activity.</text>
</comment>
<evidence type="ECO:0000250" key="1"/>
<evidence type="ECO:0000250" key="2">
    <source>
        <dbReference type="UniProtKB" id="Q9Y6B2"/>
    </source>
</evidence>
<evidence type="ECO:0000256" key="3">
    <source>
        <dbReference type="SAM" id="MobiDB-lite"/>
    </source>
</evidence>
<evidence type="ECO:0000312" key="4">
    <source>
        <dbReference type="EMBL" id="CAH90141.1"/>
    </source>
</evidence>
<feature type="chain" id="PRO_0000289158" description="EP300-interacting inhibitor of differentiation 1">
    <location>
        <begin position="1"/>
        <end position="188"/>
    </location>
</feature>
<feature type="region of interest" description="Disordered" evidence="3">
    <location>
        <begin position="1"/>
        <end position="122"/>
    </location>
</feature>
<feature type="region of interest" description="Interaction with NR0B2" evidence="2">
    <location>
        <begin position="55"/>
        <end position="121"/>
    </location>
</feature>
<feature type="short sequence motif" description="LXCXE motif">
    <location>
        <begin position="179"/>
        <end position="183"/>
    </location>
</feature>
<feature type="compositionally biased region" description="Acidic residues" evidence="3">
    <location>
        <begin position="53"/>
        <end position="64"/>
    </location>
</feature>
<feature type="compositionally biased region" description="Acidic residues" evidence="3">
    <location>
        <begin position="94"/>
        <end position="117"/>
    </location>
</feature>
<gene>
    <name evidence="2" type="primary">EID1</name>
</gene>
<name>EID1_PONAB</name>
<proteinExistence type="evidence at transcript level"/>
<sequence length="188" mass="20973">MSEMAELSELYEESSDLQMDVMPGEGDLPQMEVGSGSRELSLRPSRNGAQPQLEEEGPMEEEEAQPMAAPEGKRSLASGPNAGEQPGQVAGADFESEDEGEEFDDWEDDYDYPEEEQLSGAGYRVSAALEEADKMFLRTREPALDGGFQMHYEKTPFDQLAFIEELFSLMVVNRLTEELGCDEIIDRE</sequence>
<reference evidence="4" key="1">
    <citation type="submission" date="2004-11" db="EMBL/GenBank/DDBJ databases">
        <authorList>
            <consortium name="The German cDNA consortium"/>
        </authorList>
    </citation>
    <scope>NUCLEOTIDE SEQUENCE [LARGE SCALE MRNA]</scope>
    <source>
        <tissue evidence="4">Brain cortex</tissue>
    </source>
</reference>
<accession>Q5RDL6</accession>